<keyword id="KW-0686">Riboflavin biosynthesis</keyword>
<keyword id="KW-0808">Transferase</keyword>
<evidence type="ECO:0000255" key="1">
    <source>
        <dbReference type="HAMAP-Rule" id="MF_00178"/>
    </source>
</evidence>
<name>RISB_SALHS</name>
<feature type="chain" id="PRO_1000098225" description="6,7-dimethyl-8-ribityllumazine synthase">
    <location>
        <begin position="1"/>
        <end position="156"/>
    </location>
</feature>
<feature type="active site" description="Proton donor" evidence="1">
    <location>
        <position position="89"/>
    </location>
</feature>
<feature type="binding site" evidence="1">
    <location>
        <position position="22"/>
    </location>
    <ligand>
        <name>5-amino-6-(D-ribitylamino)uracil</name>
        <dbReference type="ChEBI" id="CHEBI:15934"/>
    </ligand>
</feature>
<feature type="binding site" evidence="1">
    <location>
        <begin position="57"/>
        <end position="59"/>
    </location>
    <ligand>
        <name>5-amino-6-(D-ribitylamino)uracil</name>
        <dbReference type="ChEBI" id="CHEBI:15934"/>
    </ligand>
</feature>
<feature type="binding site" evidence="1">
    <location>
        <begin position="81"/>
        <end position="83"/>
    </location>
    <ligand>
        <name>5-amino-6-(D-ribitylamino)uracil</name>
        <dbReference type="ChEBI" id="CHEBI:15934"/>
    </ligand>
</feature>
<feature type="binding site" evidence="1">
    <location>
        <begin position="86"/>
        <end position="87"/>
    </location>
    <ligand>
        <name>(2S)-2-hydroxy-3-oxobutyl phosphate</name>
        <dbReference type="ChEBI" id="CHEBI:58830"/>
    </ligand>
</feature>
<feature type="binding site" evidence="1">
    <location>
        <position position="114"/>
    </location>
    <ligand>
        <name>5-amino-6-(D-ribitylamino)uracil</name>
        <dbReference type="ChEBI" id="CHEBI:15934"/>
    </ligand>
</feature>
<feature type="binding site" evidence="1">
    <location>
        <position position="128"/>
    </location>
    <ligand>
        <name>(2S)-2-hydroxy-3-oxobutyl phosphate</name>
        <dbReference type="ChEBI" id="CHEBI:58830"/>
    </ligand>
</feature>
<reference key="1">
    <citation type="journal article" date="2011" name="J. Bacteriol.">
        <title>Comparative genomics of 28 Salmonella enterica isolates: evidence for CRISPR-mediated adaptive sublineage evolution.</title>
        <authorList>
            <person name="Fricke W.F."/>
            <person name="Mammel M.K."/>
            <person name="McDermott P.F."/>
            <person name="Tartera C."/>
            <person name="White D.G."/>
            <person name="Leclerc J.E."/>
            <person name="Ravel J."/>
            <person name="Cebula T.A."/>
        </authorList>
    </citation>
    <scope>NUCLEOTIDE SEQUENCE [LARGE SCALE GENOMIC DNA]</scope>
    <source>
        <strain>SL476</strain>
    </source>
</reference>
<accession>B4T8Q8</accession>
<proteinExistence type="inferred from homology"/>
<sequence length="156" mass="15950">MNIIKANVAAPDARVAITIARFNQFINDSLLDGAVDALTRIGQVKDDNITVVWVPGAYELPLATEALAKSGKYDAVVALGTVIRGGTAHFEYVAGGASNGLASVAQGSGVPVAFGVLTTESIEQAIERAGTKAGNKGAEAALTALEMINVLKAIKA</sequence>
<comment type="function">
    <text evidence="1">Catalyzes the formation of 6,7-dimethyl-8-ribityllumazine by condensation of 5-amino-6-(D-ribitylamino)uracil with 3,4-dihydroxy-2-butanone 4-phosphate. This is the penultimate step in the biosynthesis of riboflavin.</text>
</comment>
<comment type="catalytic activity">
    <reaction evidence="1">
        <text>(2S)-2-hydroxy-3-oxobutyl phosphate + 5-amino-6-(D-ribitylamino)uracil = 6,7-dimethyl-8-(1-D-ribityl)lumazine + phosphate + 2 H2O + H(+)</text>
        <dbReference type="Rhea" id="RHEA:26152"/>
        <dbReference type="ChEBI" id="CHEBI:15377"/>
        <dbReference type="ChEBI" id="CHEBI:15378"/>
        <dbReference type="ChEBI" id="CHEBI:15934"/>
        <dbReference type="ChEBI" id="CHEBI:43474"/>
        <dbReference type="ChEBI" id="CHEBI:58201"/>
        <dbReference type="ChEBI" id="CHEBI:58830"/>
        <dbReference type="EC" id="2.5.1.78"/>
    </reaction>
</comment>
<comment type="pathway">
    <text evidence="1">Cofactor biosynthesis; riboflavin biosynthesis; riboflavin from 2-hydroxy-3-oxobutyl phosphate and 5-amino-6-(D-ribitylamino)uracil: step 1/2.</text>
</comment>
<comment type="subunit">
    <text evidence="1">Forms an icosahedral capsid composed of 60 subunits, arranged as a dodecamer of pentamers.</text>
</comment>
<comment type="similarity">
    <text evidence="1">Belongs to the DMRL synthase family.</text>
</comment>
<dbReference type="EC" id="2.5.1.78" evidence="1"/>
<dbReference type="EMBL" id="CP001120">
    <property type="protein sequence ID" value="ACF66041.1"/>
    <property type="molecule type" value="Genomic_DNA"/>
</dbReference>
<dbReference type="SMR" id="B4T8Q8"/>
<dbReference type="KEGG" id="seh:SeHA_C0519"/>
<dbReference type="HOGENOM" id="CLU_089358_1_1_6"/>
<dbReference type="UniPathway" id="UPA00275">
    <property type="reaction ID" value="UER00404"/>
</dbReference>
<dbReference type="Proteomes" id="UP000001866">
    <property type="component" value="Chromosome"/>
</dbReference>
<dbReference type="GO" id="GO:0005829">
    <property type="term" value="C:cytosol"/>
    <property type="evidence" value="ECO:0007669"/>
    <property type="project" value="TreeGrafter"/>
</dbReference>
<dbReference type="GO" id="GO:0009349">
    <property type="term" value="C:riboflavin synthase complex"/>
    <property type="evidence" value="ECO:0007669"/>
    <property type="project" value="InterPro"/>
</dbReference>
<dbReference type="GO" id="GO:0000906">
    <property type="term" value="F:6,7-dimethyl-8-ribityllumazine synthase activity"/>
    <property type="evidence" value="ECO:0007669"/>
    <property type="project" value="UniProtKB-UniRule"/>
</dbReference>
<dbReference type="GO" id="GO:0009231">
    <property type="term" value="P:riboflavin biosynthetic process"/>
    <property type="evidence" value="ECO:0007669"/>
    <property type="project" value="UniProtKB-UniRule"/>
</dbReference>
<dbReference type="CDD" id="cd09209">
    <property type="entry name" value="Lumazine_synthase-I"/>
    <property type="match status" value="1"/>
</dbReference>
<dbReference type="FunFam" id="3.40.50.960:FF:000001">
    <property type="entry name" value="6,7-dimethyl-8-ribityllumazine synthase"/>
    <property type="match status" value="1"/>
</dbReference>
<dbReference type="Gene3D" id="3.40.50.960">
    <property type="entry name" value="Lumazine/riboflavin synthase"/>
    <property type="match status" value="1"/>
</dbReference>
<dbReference type="HAMAP" id="MF_00178">
    <property type="entry name" value="Lumazine_synth"/>
    <property type="match status" value="1"/>
</dbReference>
<dbReference type="InterPro" id="IPR034964">
    <property type="entry name" value="LS"/>
</dbReference>
<dbReference type="InterPro" id="IPR002180">
    <property type="entry name" value="LS/RS"/>
</dbReference>
<dbReference type="InterPro" id="IPR036467">
    <property type="entry name" value="LS/RS_sf"/>
</dbReference>
<dbReference type="NCBIfam" id="TIGR00114">
    <property type="entry name" value="lumazine-synth"/>
    <property type="match status" value="1"/>
</dbReference>
<dbReference type="NCBIfam" id="NF000812">
    <property type="entry name" value="PRK00061.1-4"/>
    <property type="match status" value="1"/>
</dbReference>
<dbReference type="PANTHER" id="PTHR21058:SF0">
    <property type="entry name" value="6,7-DIMETHYL-8-RIBITYLLUMAZINE SYNTHASE"/>
    <property type="match status" value="1"/>
</dbReference>
<dbReference type="PANTHER" id="PTHR21058">
    <property type="entry name" value="6,7-DIMETHYL-8-RIBITYLLUMAZINE SYNTHASE DMRL SYNTHASE LUMAZINE SYNTHASE"/>
    <property type="match status" value="1"/>
</dbReference>
<dbReference type="Pfam" id="PF00885">
    <property type="entry name" value="DMRL_synthase"/>
    <property type="match status" value="1"/>
</dbReference>
<dbReference type="SUPFAM" id="SSF52121">
    <property type="entry name" value="Lumazine synthase"/>
    <property type="match status" value="1"/>
</dbReference>
<protein>
    <recommendedName>
        <fullName evidence="1">6,7-dimethyl-8-ribityllumazine synthase</fullName>
        <shortName evidence="1">DMRL synthase</shortName>
        <shortName evidence="1">LS</shortName>
        <shortName evidence="1">Lumazine synthase</shortName>
        <ecNumber evidence="1">2.5.1.78</ecNumber>
    </recommendedName>
</protein>
<gene>
    <name evidence="1" type="primary">ribH</name>
    <name type="ordered locus">SeHA_C0519</name>
</gene>
<organism>
    <name type="scientific">Salmonella heidelberg (strain SL476)</name>
    <dbReference type="NCBI Taxonomy" id="454169"/>
    <lineage>
        <taxon>Bacteria</taxon>
        <taxon>Pseudomonadati</taxon>
        <taxon>Pseudomonadota</taxon>
        <taxon>Gammaproteobacteria</taxon>
        <taxon>Enterobacterales</taxon>
        <taxon>Enterobacteriaceae</taxon>
        <taxon>Salmonella</taxon>
    </lineage>
</organism>